<accession>Q8YBL8</accession>
<organism>
    <name type="scientific">Brucella melitensis biotype 1 (strain ATCC 23456 / CCUG 17765 / NCTC 10094 / 16M)</name>
    <dbReference type="NCBI Taxonomy" id="224914"/>
    <lineage>
        <taxon>Bacteria</taxon>
        <taxon>Pseudomonadati</taxon>
        <taxon>Pseudomonadota</taxon>
        <taxon>Alphaproteobacteria</taxon>
        <taxon>Hyphomicrobiales</taxon>
        <taxon>Brucellaceae</taxon>
        <taxon>Brucella/Ochrobactrum group</taxon>
        <taxon>Brucella</taxon>
    </lineage>
</organism>
<proteinExistence type="inferred from homology"/>
<dbReference type="EC" id="4.1.2.-"/>
<dbReference type="EMBL" id="AE008918">
    <property type="protein sequence ID" value="AAL54123.1"/>
    <property type="molecule type" value="Genomic_DNA"/>
</dbReference>
<dbReference type="PIR" id="AH3619">
    <property type="entry name" value="AH3619"/>
</dbReference>
<dbReference type="RefSeq" id="WP_002968355.1">
    <property type="nucleotide sequence ID" value="NZ_GG703779.1"/>
</dbReference>
<dbReference type="SMR" id="Q8YBL8"/>
<dbReference type="GeneID" id="29595422"/>
<dbReference type="KEGG" id="bme:BMEII0881"/>
<dbReference type="KEGG" id="bmel:DK63_2367"/>
<dbReference type="PATRIC" id="fig|224914.52.peg.2480"/>
<dbReference type="eggNOG" id="COG3957">
    <property type="taxonomic scope" value="Bacteria"/>
</dbReference>
<dbReference type="PhylomeDB" id="Q8YBL8"/>
<dbReference type="Proteomes" id="UP000000419">
    <property type="component" value="Chromosome II"/>
</dbReference>
<dbReference type="GO" id="GO:0016832">
    <property type="term" value="F:aldehyde-lyase activity"/>
    <property type="evidence" value="ECO:0007669"/>
    <property type="project" value="UniProtKB-UniRule"/>
</dbReference>
<dbReference type="GO" id="GO:0005975">
    <property type="term" value="P:carbohydrate metabolic process"/>
    <property type="evidence" value="ECO:0007669"/>
    <property type="project" value="InterPro"/>
</dbReference>
<dbReference type="CDD" id="cd02011">
    <property type="entry name" value="TPP_PK"/>
    <property type="match status" value="1"/>
</dbReference>
<dbReference type="FunFam" id="3.40.50.970:FF:000091">
    <property type="entry name" value="Xylulose-5-phosphate/fructose-6-phosphate phosphoketolase"/>
    <property type="match status" value="1"/>
</dbReference>
<dbReference type="Gene3D" id="3.40.50.920">
    <property type="match status" value="1"/>
</dbReference>
<dbReference type="Gene3D" id="3.40.50.970">
    <property type="match status" value="2"/>
</dbReference>
<dbReference type="HAMAP" id="MF_01403">
    <property type="entry name" value="Phosphoketolase"/>
    <property type="match status" value="1"/>
</dbReference>
<dbReference type="InterPro" id="IPR023962">
    <property type="entry name" value="Phosphoketolase"/>
</dbReference>
<dbReference type="InterPro" id="IPR029061">
    <property type="entry name" value="THDP-binding"/>
</dbReference>
<dbReference type="InterPro" id="IPR009014">
    <property type="entry name" value="Transketo_C/PFOR_II"/>
</dbReference>
<dbReference type="InterPro" id="IPR005593">
    <property type="entry name" value="Xul5P/Fru6P_PKetolase"/>
</dbReference>
<dbReference type="InterPro" id="IPR018969">
    <property type="entry name" value="Xul5P/Fru6P_PKetolase_C"/>
</dbReference>
<dbReference type="InterPro" id="IPR019790">
    <property type="entry name" value="Xul5P/Fru6P_PKetolase_CS"/>
</dbReference>
<dbReference type="InterPro" id="IPR018970">
    <property type="entry name" value="Xul5P/Fru6P_PKetolase_N"/>
</dbReference>
<dbReference type="InterPro" id="IPR019789">
    <property type="entry name" value="Xul5P/Fru6P_PKetolase_ThDP_BS"/>
</dbReference>
<dbReference type="NCBIfam" id="NF003616">
    <property type="entry name" value="PRK05261.1-1"/>
    <property type="match status" value="1"/>
</dbReference>
<dbReference type="NCBIfam" id="NF003617">
    <property type="entry name" value="PRK05261.1-2"/>
    <property type="match status" value="1"/>
</dbReference>
<dbReference type="NCBIfam" id="NF003619">
    <property type="entry name" value="PRK05261.1-4"/>
    <property type="match status" value="1"/>
</dbReference>
<dbReference type="NCBIfam" id="NF003621">
    <property type="entry name" value="PRK05261.1-6"/>
    <property type="match status" value="1"/>
</dbReference>
<dbReference type="PANTHER" id="PTHR31273">
    <property type="entry name" value="PHOSPHOKETOLASE-RELATED"/>
    <property type="match status" value="1"/>
</dbReference>
<dbReference type="PANTHER" id="PTHR31273:SF0">
    <property type="entry name" value="PHOSPHOKETOLASE-RELATED"/>
    <property type="match status" value="1"/>
</dbReference>
<dbReference type="Pfam" id="PF03894">
    <property type="entry name" value="XFP"/>
    <property type="match status" value="1"/>
</dbReference>
<dbReference type="Pfam" id="PF09363">
    <property type="entry name" value="XFP_C"/>
    <property type="match status" value="1"/>
</dbReference>
<dbReference type="Pfam" id="PF09364">
    <property type="entry name" value="XFP_N"/>
    <property type="match status" value="1"/>
</dbReference>
<dbReference type="PIRSF" id="PIRSF017245">
    <property type="entry name" value="Phosphoketolase"/>
    <property type="match status" value="1"/>
</dbReference>
<dbReference type="SUPFAM" id="SSF52518">
    <property type="entry name" value="Thiamin diphosphate-binding fold (THDP-binding)"/>
    <property type="match status" value="2"/>
</dbReference>
<dbReference type="PROSITE" id="PS60002">
    <property type="entry name" value="PHOSPHOKETOLASE_1"/>
    <property type="match status" value="1"/>
</dbReference>
<dbReference type="PROSITE" id="PS60003">
    <property type="entry name" value="PHOSPHOKETOLASE_2"/>
    <property type="match status" value="1"/>
</dbReference>
<sequence>MSTVPAKGPLTPQQLSLINRYWRAANYLSVGQIYLMKNPLLREPLQPEHIKPRLLGHWGTTPGLNFIYAHLNRIIQQRNANVIYICGPGHGGPGMVANTYLEGTYSEIYPAISEDEAGMERLFRQFSFPGGIPSHAAPETPGSIHEGGELGYALVHAYGAAFDNPDLVVACVVGDGEAETGALATSWHSNKFLNPARDGAVLPILHLNGYKIANPTVLARLSDDDLDNLFRGYGYEPFFVEGSEPADMHQKMAATLDTIFQRIQDIKKNADVHSPERPRWPMIILRSPKGWTGPKTVDGLVVENYWRAHQVPVANCRENDAHRKILEDWMKSYDPSDLFDEKGALKPELRALAPKGEARIGANPHANGGLLRKELHMPDFRQYAVNVTEPGAIEAQSTKILGDFLRDVMKLNETEKNFRIFGPDETASNRLGSVLEATNRVWMAETLDMDDHLAADGRVMEVLSEHLCQGWLEGYLLSGRHGFFSCYEAFIHIIDSMFNQHAKWLQVARELEWRKPISSLNYLLTSHVWRQDHNGFSHQDPGFVDLVANKSADIARVYFPPDANTLLWVGDHCLKTWNRVNVIVAGKQPEPQWLTMAEAEKHCEAGLGIWEWAGTEDGLEPDIVMACAGDVPTMETLAAVDLLRQSLPHLRIRVVNVVDLMVLQSPHQHPHGISDEEFDRMFTTNRPVIFAYHGYPYLIHRLVYKRTNHSNFHVRGFIEQGTTTTPFDMTVLNELDRFHLAMEAVERLPLGESVAKPLIDNFTEKLALHKDYIRQHGEDMPEIRDWKWTWPR</sequence>
<gene>
    <name type="ordered locus">BMEII0881</name>
</gene>
<reference key="1">
    <citation type="journal article" date="2002" name="Proc. Natl. Acad. Sci. U.S.A.">
        <title>The genome sequence of the facultative intracellular pathogen Brucella melitensis.</title>
        <authorList>
            <person name="DelVecchio V.G."/>
            <person name="Kapatral V."/>
            <person name="Redkar R.J."/>
            <person name="Patra G."/>
            <person name="Mujer C."/>
            <person name="Los T."/>
            <person name="Ivanova N."/>
            <person name="Anderson I."/>
            <person name="Bhattacharyya A."/>
            <person name="Lykidis A."/>
            <person name="Reznik G."/>
            <person name="Jablonski L."/>
            <person name="Larsen N."/>
            <person name="D'Souza M."/>
            <person name="Bernal A."/>
            <person name="Mazur M."/>
            <person name="Goltsman E."/>
            <person name="Selkov E."/>
            <person name="Elzer P.H."/>
            <person name="Hagius S."/>
            <person name="O'Callaghan D."/>
            <person name="Letesson J.-J."/>
            <person name="Haselkorn R."/>
            <person name="Kyrpides N.C."/>
            <person name="Overbeek R."/>
        </authorList>
    </citation>
    <scope>NUCLEOTIDE SEQUENCE [LARGE SCALE GENOMIC DNA]</scope>
    <source>
        <strain>ATCC 23456 / CCUG 17765 / NCTC 10094 / 16M</strain>
    </source>
</reference>
<comment type="cofactor">
    <cofactor evidence="1">
        <name>thiamine diphosphate</name>
        <dbReference type="ChEBI" id="CHEBI:58937"/>
    </cofactor>
</comment>
<comment type="similarity">
    <text evidence="1">Belongs to the XFP family.</text>
</comment>
<evidence type="ECO:0000305" key="1"/>
<name>PHK_BRUME</name>
<feature type="chain" id="PRO_0000193872" description="Probable phosphoketolase">
    <location>
        <begin position="1"/>
        <end position="792"/>
    </location>
</feature>
<protein>
    <recommendedName>
        <fullName>Probable phosphoketolase</fullName>
        <ecNumber>4.1.2.-</ecNumber>
    </recommendedName>
</protein>
<keyword id="KW-0456">Lyase</keyword>
<keyword id="KW-0786">Thiamine pyrophosphate</keyword>